<protein>
    <recommendedName>
        <fullName>Exopolysaccharide production protein ExoY</fullName>
    </recommendedName>
</protein>
<proteinExistence type="inferred from homology"/>
<accession>Q02731</accession>
<organism>
    <name type="scientific">Rhizobium meliloti (strain 1021)</name>
    <name type="common">Ensifer meliloti</name>
    <name type="synonym">Sinorhizobium meliloti</name>
    <dbReference type="NCBI Taxonomy" id="266834"/>
    <lineage>
        <taxon>Bacteria</taxon>
        <taxon>Pseudomonadati</taxon>
        <taxon>Pseudomonadota</taxon>
        <taxon>Alphaproteobacteria</taxon>
        <taxon>Hyphomicrobiales</taxon>
        <taxon>Rhizobiaceae</taxon>
        <taxon>Sinorhizobium/Ensifer group</taxon>
        <taxon>Sinorhizobium</taxon>
    </lineage>
</organism>
<comment type="function">
    <text>Needed for the addition of the first sugar (galactose) to the isoprenoid carrier. May function as a sugar transferase.</text>
</comment>
<comment type="pathway">
    <text>Glycan metabolism; exopolysaccharide biosynthesis.</text>
</comment>
<comment type="subcellular location">
    <subcellularLocation>
        <location>Cell membrane</location>
        <topology>Single-pass membrane protein</topology>
    </subcellularLocation>
</comment>
<comment type="similarity">
    <text evidence="2">Belongs to the bacterial sugar transferase family.</text>
</comment>
<name>EXOY_RHIME</name>
<feature type="chain" id="PRO_0000166465" description="Exopolysaccharide production protein ExoY">
    <location>
        <begin position="1"/>
        <end position="226"/>
    </location>
</feature>
<feature type="transmembrane region" description="Helical" evidence="1">
    <location>
        <begin position="34"/>
        <end position="54"/>
    </location>
</feature>
<dbReference type="EMBL" id="L05588">
    <property type="protein sequence ID" value="AAA26264.1"/>
    <property type="molecule type" value="Genomic_DNA"/>
</dbReference>
<dbReference type="EMBL" id="AL591985">
    <property type="protein sequence ID" value="CAC49469.1"/>
    <property type="molecule type" value="Genomic_DNA"/>
</dbReference>
<dbReference type="EMBL" id="M61751">
    <property type="protein sequence ID" value="AAA26262.1"/>
    <property type="molecule type" value="Genomic_DNA"/>
</dbReference>
<dbReference type="PIR" id="B39437">
    <property type="entry name" value="B39437"/>
</dbReference>
<dbReference type="PIR" id="E95975">
    <property type="entry name" value="E95975"/>
</dbReference>
<dbReference type="RefSeq" id="NP_437609.1">
    <property type="nucleotide sequence ID" value="NC_003078.1"/>
</dbReference>
<dbReference type="RefSeq" id="WP_010975907.1">
    <property type="nucleotide sequence ID" value="NC_003078.1"/>
</dbReference>
<dbReference type="SMR" id="Q02731"/>
<dbReference type="DNASU" id="1237400"/>
<dbReference type="EnsemblBacteria" id="CAC49469">
    <property type="protein sequence ID" value="CAC49469"/>
    <property type="gene ID" value="SM_b20946"/>
</dbReference>
<dbReference type="GeneID" id="89577830"/>
<dbReference type="KEGG" id="sme:SM_b20946"/>
<dbReference type="PATRIC" id="fig|266834.11.peg.5998"/>
<dbReference type="eggNOG" id="COG2148">
    <property type="taxonomic scope" value="Bacteria"/>
</dbReference>
<dbReference type="HOGENOM" id="CLU_024920_1_0_5"/>
<dbReference type="OrthoDB" id="9808602at2"/>
<dbReference type="BioCyc" id="MetaCyc:SM_B20946-MONOMER"/>
<dbReference type="UniPathway" id="UPA00631"/>
<dbReference type="PRO" id="PR:Q02731"/>
<dbReference type="Proteomes" id="UP000001976">
    <property type="component" value="Plasmid pSymB"/>
</dbReference>
<dbReference type="GO" id="GO:0005886">
    <property type="term" value="C:plasma membrane"/>
    <property type="evidence" value="ECO:0007669"/>
    <property type="project" value="UniProtKB-SubCell"/>
</dbReference>
<dbReference type="GO" id="GO:0016780">
    <property type="term" value="F:phosphotransferase activity, for other substituted phosphate groups"/>
    <property type="evidence" value="ECO:0007669"/>
    <property type="project" value="TreeGrafter"/>
</dbReference>
<dbReference type="GO" id="GO:0000271">
    <property type="term" value="P:polysaccharide biosynthetic process"/>
    <property type="evidence" value="ECO:0007669"/>
    <property type="project" value="UniProtKB-KW"/>
</dbReference>
<dbReference type="InterPro" id="IPR003362">
    <property type="entry name" value="Bact_transf"/>
</dbReference>
<dbReference type="PANTHER" id="PTHR30576">
    <property type="entry name" value="COLANIC BIOSYNTHESIS UDP-GLUCOSE LIPID CARRIER TRANSFERASE"/>
    <property type="match status" value="1"/>
</dbReference>
<dbReference type="PANTHER" id="PTHR30576:SF4">
    <property type="entry name" value="UNDECAPRENYL-PHOSPHATE GALACTOSE PHOSPHOTRANSFERASE"/>
    <property type="match status" value="1"/>
</dbReference>
<dbReference type="Pfam" id="PF02397">
    <property type="entry name" value="Bac_transf"/>
    <property type="match status" value="1"/>
</dbReference>
<keyword id="KW-1003">Cell membrane</keyword>
<keyword id="KW-0270">Exopolysaccharide synthesis</keyword>
<keyword id="KW-0472">Membrane</keyword>
<keyword id="KW-0614">Plasmid</keyword>
<keyword id="KW-1185">Reference proteome</keyword>
<keyword id="KW-0808">Transferase</keyword>
<keyword id="KW-0812">Transmembrane</keyword>
<keyword id="KW-1133">Transmembrane helix</keyword>
<sequence length="226" mass="25353">MKSATRSASSPFFIPEETGAVRPIGGMAKRSFDVLAASVALLLFSPLFLLIMALVKFSDGGSVFYGHRRIGHNGQSFKCLKFRTMMEKGDEVLEEFFRINPDAYEEWRATRKLQNDPRVTVVGAVLRKLSLDELPQLLNIIRGEMSVVGPRPVVEDELELYDSAAVFYLRSRPGLTGLWQISGRNDVSYATRVAFDTQYVQNWSLFADLVIVFKTIPAVCLSRGSY</sequence>
<reference key="1">
    <citation type="journal article" date="1993" name="Mol. Plant Microbe Interact.">
        <title>Genetic analysis of the Rhizobium meliloti exoYFQ operon: ExoY is homologous to sugar transferases and ExoQ represents a transmembrane protein.</title>
        <authorList>
            <person name="Mueller P."/>
            <person name="Keller M."/>
            <person name="Weng W.M."/>
            <person name="Quandt J."/>
            <person name="Arnold W."/>
            <person name="Puehler A."/>
        </authorList>
    </citation>
    <scope>NUCLEOTIDE SEQUENCE [GENOMIC DNA]</scope>
    <source>
        <strain>RCR2011 / SU47</strain>
    </source>
</reference>
<reference key="2">
    <citation type="journal article" date="2001" name="Proc. Natl. Acad. Sci. U.S.A.">
        <title>The complete sequence of the 1,683-kb pSymB megaplasmid from the N2-fixing endosymbiont Sinorhizobium meliloti.</title>
        <authorList>
            <person name="Finan T.M."/>
            <person name="Weidner S."/>
            <person name="Wong K."/>
            <person name="Buhrmester J."/>
            <person name="Chain P."/>
            <person name="Vorhoelter F.J."/>
            <person name="Hernandez-Lucas I."/>
            <person name="Becker A."/>
            <person name="Cowie A."/>
            <person name="Gouzy J."/>
            <person name="Golding B."/>
            <person name="Puehler A."/>
        </authorList>
    </citation>
    <scope>NUCLEOTIDE SEQUENCE [LARGE SCALE GENOMIC DNA]</scope>
    <source>
        <strain>1021</strain>
    </source>
</reference>
<reference key="3">
    <citation type="journal article" date="2001" name="Science">
        <title>The composite genome of the legume symbiont Sinorhizobium meliloti.</title>
        <authorList>
            <person name="Galibert F."/>
            <person name="Finan T.M."/>
            <person name="Long S.R."/>
            <person name="Puehler A."/>
            <person name="Abola P."/>
            <person name="Ampe F."/>
            <person name="Barloy-Hubler F."/>
            <person name="Barnett M.J."/>
            <person name="Becker A."/>
            <person name="Boistard P."/>
            <person name="Bothe G."/>
            <person name="Boutry M."/>
            <person name="Bowser L."/>
            <person name="Buhrmester J."/>
            <person name="Cadieu E."/>
            <person name="Capela D."/>
            <person name="Chain P."/>
            <person name="Cowie A."/>
            <person name="Davis R.W."/>
            <person name="Dreano S."/>
            <person name="Federspiel N.A."/>
            <person name="Fisher R.F."/>
            <person name="Gloux S."/>
            <person name="Godrie T."/>
            <person name="Goffeau A."/>
            <person name="Golding B."/>
            <person name="Gouzy J."/>
            <person name="Gurjal M."/>
            <person name="Hernandez-Lucas I."/>
            <person name="Hong A."/>
            <person name="Huizar L."/>
            <person name="Hyman R.W."/>
            <person name="Jones T."/>
            <person name="Kahn D."/>
            <person name="Kahn M.L."/>
            <person name="Kalman S."/>
            <person name="Keating D.H."/>
            <person name="Kiss E."/>
            <person name="Komp C."/>
            <person name="Lelaure V."/>
            <person name="Masuy D."/>
            <person name="Palm C."/>
            <person name="Peck M.C."/>
            <person name="Pohl T.M."/>
            <person name="Portetelle D."/>
            <person name="Purnelle B."/>
            <person name="Ramsperger U."/>
            <person name="Surzycki R."/>
            <person name="Thebault P."/>
            <person name="Vandenbol M."/>
            <person name="Vorhoelter F.J."/>
            <person name="Weidner S."/>
            <person name="Wells D.H."/>
            <person name="Wong K."/>
            <person name="Yeh K.-C."/>
            <person name="Batut J."/>
        </authorList>
    </citation>
    <scope>NUCLEOTIDE SEQUENCE [LARGE SCALE GENOMIC DNA]</scope>
    <source>
        <strain>1021</strain>
    </source>
</reference>
<reference key="4">
    <citation type="journal article" date="1991" name="J. Bacteriol.">
        <title>Rhizobium meliloti exoG and exoJ mutations affect the exoX-exoY system for modulation of exopolysaccharide production.</title>
        <authorList>
            <person name="Reed J.W."/>
            <person name="Capage M."/>
            <person name="Walker G.C."/>
        </authorList>
    </citation>
    <scope>NUCLEOTIDE SEQUENCE [GENOMIC DNA] OF 1-113</scope>
    <source>
        <strain>1021</strain>
    </source>
</reference>
<evidence type="ECO:0000255" key="1"/>
<evidence type="ECO:0000305" key="2"/>
<geneLocation type="plasmid">
    <name>pSymB</name>
    <name>megaplasmid 2</name>
</geneLocation>
<gene>
    <name type="primary">exoY</name>
    <name type="ordered locus">RB1069</name>
    <name type="ORF">SMb20946</name>
</gene>